<evidence type="ECO:0000255" key="1">
    <source>
        <dbReference type="HAMAP-Rule" id="MF_01350"/>
    </source>
</evidence>
<sequence>MSYYYNIFTDFISCISSGAVLLIKIMAVIISVMVSVAYLVYMERKVIGAIQLRQGPNVVGPFGLLQPFADAVKLIIKEHIIPFKSNKICFLIAPIITFTLALLGWAVIPFGADVIVNNGHEVIIPNVIANINIGVLYILAISSLGVYGIIIAGWSSNSNYAFLGAIRSASQMISYEVSIGLTIVTVLLATGSLKLGEIVVARHNMPYWIDLLLLPMACVFFISSLAETNRHPFDLPEAESELVSGYNVEYSSMPFALFFLGEYANMILINAMAVIFFFGGWYPPLNISFLYVIPGIIWFVLKIIVLLFCFIWIRATIPRYRYDQLMRLGWKVFLPISLLWVVLVSGVLLYTDSLPRNAYGIQYVHDLDQ</sequence>
<gene>
    <name evidence="1" type="primary">nuoH</name>
    <name type="ordered locus">Ecaj_0422</name>
</gene>
<protein>
    <recommendedName>
        <fullName evidence="1">NADH-quinone oxidoreductase subunit H</fullName>
        <ecNumber evidence="1">7.1.1.-</ecNumber>
    </recommendedName>
    <alternativeName>
        <fullName evidence="1">NADH dehydrogenase I subunit H</fullName>
    </alternativeName>
    <alternativeName>
        <fullName evidence="1">NDH-1 subunit H</fullName>
    </alternativeName>
</protein>
<feature type="chain" id="PRO_0000244913" description="NADH-quinone oxidoreductase subunit H">
    <location>
        <begin position="1"/>
        <end position="369"/>
    </location>
</feature>
<feature type="transmembrane region" description="Helical" evidence="1">
    <location>
        <begin position="20"/>
        <end position="40"/>
    </location>
</feature>
<feature type="transmembrane region" description="Helical" evidence="1">
    <location>
        <begin position="88"/>
        <end position="108"/>
    </location>
</feature>
<feature type="transmembrane region" description="Helical" evidence="1">
    <location>
        <begin position="133"/>
        <end position="153"/>
    </location>
</feature>
<feature type="transmembrane region" description="Helical" evidence="1">
    <location>
        <begin position="179"/>
        <end position="199"/>
    </location>
</feature>
<feature type="transmembrane region" description="Helical" evidence="1">
    <location>
        <begin position="205"/>
        <end position="225"/>
    </location>
</feature>
<feature type="transmembrane region" description="Helical" evidence="1">
    <location>
        <begin position="267"/>
        <end position="287"/>
    </location>
</feature>
<feature type="transmembrane region" description="Helical" evidence="1">
    <location>
        <begin position="293"/>
        <end position="313"/>
    </location>
</feature>
<feature type="transmembrane region" description="Helical" evidence="1">
    <location>
        <begin position="328"/>
        <end position="348"/>
    </location>
</feature>
<keyword id="KW-0997">Cell inner membrane</keyword>
<keyword id="KW-1003">Cell membrane</keyword>
<keyword id="KW-0472">Membrane</keyword>
<keyword id="KW-0520">NAD</keyword>
<keyword id="KW-0874">Quinone</keyword>
<keyword id="KW-1278">Translocase</keyword>
<keyword id="KW-0812">Transmembrane</keyword>
<keyword id="KW-1133">Transmembrane helix</keyword>
<keyword id="KW-0830">Ubiquinone</keyword>
<accession>Q3YS40</accession>
<proteinExistence type="inferred from homology"/>
<comment type="function">
    <text evidence="1">NDH-1 shuttles electrons from NADH, via FMN and iron-sulfur (Fe-S) centers, to quinones in the respiratory chain. The immediate electron acceptor for the enzyme in this species is believed to be ubiquinone. Couples the redox reaction to proton translocation (for every two electrons transferred, four hydrogen ions are translocated across the cytoplasmic membrane), and thus conserves the redox energy in a proton gradient. This subunit may bind ubiquinone.</text>
</comment>
<comment type="catalytic activity">
    <reaction evidence="1">
        <text>a quinone + NADH + 5 H(+)(in) = a quinol + NAD(+) + 4 H(+)(out)</text>
        <dbReference type="Rhea" id="RHEA:57888"/>
        <dbReference type="ChEBI" id="CHEBI:15378"/>
        <dbReference type="ChEBI" id="CHEBI:24646"/>
        <dbReference type="ChEBI" id="CHEBI:57540"/>
        <dbReference type="ChEBI" id="CHEBI:57945"/>
        <dbReference type="ChEBI" id="CHEBI:132124"/>
    </reaction>
</comment>
<comment type="subunit">
    <text evidence="1">NDH-1 is composed of 14 different subunits. Subunits NuoA, H, J, K, L, M, N constitute the membrane sector of the complex.</text>
</comment>
<comment type="subcellular location">
    <subcellularLocation>
        <location evidence="1">Cell inner membrane</location>
        <topology evidence="1">Multi-pass membrane protein</topology>
    </subcellularLocation>
</comment>
<comment type="similarity">
    <text evidence="1">Belongs to the complex I subunit 1 family.</text>
</comment>
<name>NUOH_EHRCJ</name>
<organism>
    <name type="scientific">Ehrlichia canis (strain Jake)</name>
    <dbReference type="NCBI Taxonomy" id="269484"/>
    <lineage>
        <taxon>Bacteria</taxon>
        <taxon>Pseudomonadati</taxon>
        <taxon>Pseudomonadota</taxon>
        <taxon>Alphaproteobacteria</taxon>
        <taxon>Rickettsiales</taxon>
        <taxon>Anaplasmataceae</taxon>
        <taxon>Ehrlichia</taxon>
    </lineage>
</organism>
<reference key="1">
    <citation type="journal article" date="2006" name="J. Bacteriol.">
        <title>The genome of the obligately intracellular bacterium Ehrlichia canis reveals themes of complex membrane structure and immune evasion strategies.</title>
        <authorList>
            <person name="Mavromatis K."/>
            <person name="Doyle C.K."/>
            <person name="Lykidis A."/>
            <person name="Ivanova N."/>
            <person name="Francino M.P."/>
            <person name="Chain P."/>
            <person name="Shin M."/>
            <person name="Malfatti S."/>
            <person name="Larimer F."/>
            <person name="Copeland A."/>
            <person name="Detter J.C."/>
            <person name="Land M."/>
            <person name="Richardson P.M."/>
            <person name="Yu X.J."/>
            <person name="Walker D.H."/>
            <person name="McBride J.W."/>
            <person name="Kyrpides N.C."/>
        </authorList>
    </citation>
    <scope>NUCLEOTIDE SEQUENCE [LARGE SCALE GENOMIC DNA]</scope>
    <source>
        <strain>Jake</strain>
    </source>
</reference>
<dbReference type="EC" id="7.1.1.-" evidence="1"/>
<dbReference type="EMBL" id="CP000107">
    <property type="protein sequence ID" value="AAZ68465.1"/>
    <property type="molecule type" value="Genomic_DNA"/>
</dbReference>
<dbReference type="RefSeq" id="WP_011304543.1">
    <property type="nucleotide sequence ID" value="NC_007354.1"/>
</dbReference>
<dbReference type="SMR" id="Q3YS40"/>
<dbReference type="FunCoup" id="Q3YS40">
    <property type="interactions" value="109"/>
</dbReference>
<dbReference type="STRING" id="269484.Ecaj_0422"/>
<dbReference type="KEGG" id="ecn:Ecaj_0422"/>
<dbReference type="eggNOG" id="COG1005">
    <property type="taxonomic scope" value="Bacteria"/>
</dbReference>
<dbReference type="HOGENOM" id="CLU_015134_0_1_5"/>
<dbReference type="InParanoid" id="Q3YS40"/>
<dbReference type="Proteomes" id="UP000000435">
    <property type="component" value="Chromosome"/>
</dbReference>
<dbReference type="GO" id="GO:0005886">
    <property type="term" value="C:plasma membrane"/>
    <property type="evidence" value="ECO:0007669"/>
    <property type="project" value="UniProtKB-SubCell"/>
</dbReference>
<dbReference type="GO" id="GO:0003954">
    <property type="term" value="F:NADH dehydrogenase activity"/>
    <property type="evidence" value="ECO:0007669"/>
    <property type="project" value="TreeGrafter"/>
</dbReference>
<dbReference type="GO" id="GO:0016655">
    <property type="term" value="F:oxidoreductase activity, acting on NAD(P)H, quinone or similar compound as acceptor"/>
    <property type="evidence" value="ECO:0007669"/>
    <property type="project" value="UniProtKB-UniRule"/>
</dbReference>
<dbReference type="GO" id="GO:0048038">
    <property type="term" value="F:quinone binding"/>
    <property type="evidence" value="ECO:0007669"/>
    <property type="project" value="UniProtKB-KW"/>
</dbReference>
<dbReference type="GO" id="GO:0009060">
    <property type="term" value="P:aerobic respiration"/>
    <property type="evidence" value="ECO:0007669"/>
    <property type="project" value="TreeGrafter"/>
</dbReference>
<dbReference type="HAMAP" id="MF_01350">
    <property type="entry name" value="NDH1_NuoH"/>
    <property type="match status" value="1"/>
</dbReference>
<dbReference type="InterPro" id="IPR001694">
    <property type="entry name" value="NADH_UbQ_OxRdtase_su1/FPO"/>
</dbReference>
<dbReference type="InterPro" id="IPR018086">
    <property type="entry name" value="NADH_UbQ_OxRdtase_su1_CS"/>
</dbReference>
<dbReference type="NCBIfam" id="NF004741">
    <property type="entry name" value="PRK06076.1-2"/>
    <property type="match status" value="1"/>
</dbReference>
<dbReference type="NCBIfam" id="NF004745">
    <property type="entry name" value="PRK06076.1-6"/>
    <property type="match status" value="1"/>
</dbReference>
<dbReference type="PANTHER" id="PTHR11432">
    <property type="entry name" value="NADH DEHYDROGENASE SUBUNIT 1"/>
    <property type="match status" value="1"/>
</dbReference>
<dbReference type="PANTHER" id="PTHR11432:SF3">
    <property type="entry name" value="NADH-UBIQUINONE OXIDOREDUCTASE CHAIN 1"/>
    <property type="match status" value="1"/>
</dbReference>
<dbReference type="Pfam" id="PF00146">
    <property type="entry name" value="NADHdh"/>
    <property type="match status" value="1"/>
</dbReference>
<dbReference type="PROSITE" id="PS00667">
    <property type="entry name" value="COMPLEX1_ND1_1"/>
    <property type="match status" value="1"/>
</dbReference>
<dbReference type="PROSITE" id="PS00668">
    <property type="entry name" value="COMPLEX1_ND1_2"/>
    <property type="match status" value="1"/>
</dbReference>